<feature type="chain" id="PRO_0000156319" description="Phosphopantetheine adenylyltransferase">
    <location>
        <begin position="1"/>
        <end position="156"/>
    </location>
</feature>
<gene>
    <name evidence="1" type="primary">coaD</name>
    <name type="ordered locus">MA_3546</name>
</gene>
<comment type="function">
    <text evidence="1">Reversibly transfers an adenylyl group from ATP to 4'-phosphopantetheine, yielding dephospho-CoA (dPCoA) and pyrophosphate.</text>
</comment>
<comment type="catalytic activity">
    <reaction evidence="1">
        <text>(R)-4'-phosphopantetheine + ATP + H(+) = 3'-dephospho-CoA + diphosphate</text>
        <dbReference type="Rhea" id="RHEA:19801"/>
        <dbReference type="ChEBI" id="CHEBI:15378"/>
        <dbReference type="ChEBI" id="CHEBI:30616"/>
        <dbReference type="ChEBI" id="CHEBI:33019"/>
        <dbReference type="ChEBI" id="CHEBI:57328"/>
        <dbReference type="ChEBI" id="CHEBI:61723"/>
        <dbReference type="EC" id="2.7.7.3"/>
    </reaction>
</comment>
<comment type="pathway">
    <text evidence="1">Cofactor biosynthesis; coenzyme A biosynthesis.</text>
</comment>
<comment type="subcellular location">
    <subcellularLocation>
        <location evidence="1">Cytoplasm</location>
    </subcellularLocation>
</comment>
<comment type="similarity">
    <text evidence="1">Belongs to the eukaryotic CoaD family.</text>
</comment>
<name>COAD_METAC</name>
<reference key="1">
    <citation type="journal article" date="2002" name="Genome Res.">
        <title>The genome of Methanosarcina acetivorans reveals extensive metabolic and physiological diversity.</title>
        <authorList>
            <person name="Galagan J.E."/>
            <person name="Nusbaum C."/>
            <person name="Roy A."/>
            <person name="Endrizzi M.G."/>
            <person name="Macdonald P."/>
            <person name="FitzHugh W."/>
            <person name="Calvo S."/>
            <person name="Engels R."/>
            <person name="Smirnov S."/>
            <person name="Atnoor D."/>
            <person name="Brown A."/>
            <person name="Allen N."/>
            <person name="Naylor J."/>
            <person name="Stange-Thomann N."/>
            <person name="DeArellano K."/>
            <person name="Johnson R."/>
            <person name="Linton L."/>
            <person name="McEwan P."/>
            <person name="McKernan K."/>
            <person name="Talamas J."/>
            <person name="Tirrell A."/>
            <person name="Ye W."/>
            <person name="Zimmer A."/>
            <person name="Barber R.D."/>
            <person name="Cann I."/>
            <person name="Graham D.E."/>
            <person name="Grahame D.A."/>
            <person name="Guss A.M."/>
            <person name="Hedderich R."/>
            <person name="Ingram-Smith C."/>
            <person name="Kuettner H.C."/>
            <person name="Krzycki J.A."/>
            <person name="Leigh J.A."/>
            <person name="Li W."/>
            <person name="Liu J."/>
            <person name="Mukhopadhyay B."/>
            <person name="Reeve J.N."/>
            <person name="Smith K."/>
            <person name="Springer T.A."/>
            <person name="Umayam L.A."/>
            <person name="White O."/>
            <person name="White R.H."/>
            <person name="de Macario E.C."/>
            <person name="Ferry J.G."/>
            <person name="Jarrell K.F."/>
            <person name="Jing H."/>
            <person name="Macario A.J.L."/>
            <person name="Paulsen I.T."/>
            <person name="Pritchett M."/>
            <person name="Sowers K.R."/>
            <person name="Swanson R.V."/>
            <person name="Zinder S.H."/>
            <person name="Lander E."/>
            <person name="Metcalf W.W."/>
            <person name="Birren B."/>
        </authorList>
    </citation>
    <scope>NUCLEOTIDE SEQUENCE [LARGE SCALE GENOMIC DNA]</scope>
    <source>
        <strain>ATCC 35395 / DSM 2834 / JCM 12185 / C2A</strain>
    </source>
</reference>
<dbReference type="EC" id="2.7.7.3" evidence="1"/>
<dbReference type="EMBL" id="AE010299">
    <property type="protein sequence ID" value="AAM06908.1"/>
    <property type="molecule type" value="Genomic_DNA"/>
</dbReference>
<dbReference type="RefSeq" id="WP_011023461.1">
    <property type="nucleotide sequence ID" value="NC_003552.1"/>
</dbReference>
<dbReference type="SMR" id="Q8TK70"/>
<dbReference type="FunCoup" id="Q8TK70">
    <property type="interactions" value="103"/>
</dbReference>
<dbReference type="STRING" id="188937.MA_3546"/>
<dbReference type="EnsemblBacteria" id="AAM06908">
    <property type="protein sequence ID" value="AAM06908"/>
    <property type="gene ID" value="MA_3546"/>
</dbReference>
<dbReference type="GeneID" id="1475439"/>
<dbReference type="KEGG" id="mac:MA_3546"/>
<dbReference type="HOGENOM" id="CLU_035272_5_0_2"/>
<dbReference type="InParanoid" id="Q8TK70"/>
<dbReference type="OrthoDB" id="53228at2157"/>
<dbReference type="PhylomeDB" id="Q8TK70"/>
<dbReference type="UniPathway" id="UPA00241"/>
<dbReference type="Proteomes" id="UP000002487">
    <property type="component" value="Chromosome"/>
</dbReference>
<dbReference type="GO" id="GO:0005737">
    <property type="term" value="C:cytoplasm"/>
    <property type="evidence" value="ECO:0007669"/>
    <property type="project" value="UniProtKB-SubCell"/>
</dbReference>
<dbReference type="GO" id="GO:0005524">
    <property type="term" value="F:ATP binding"/>
    <property type="evidence" value="ECO:0007669"/>
    <property type="project" value="UniProtKB-KW"/>
</dbReference>
<dbReference type="GO" id="GO:0004140">
    <property type="term" value="F:dephospho-CoA kinase activity"/>
    <property type="evidence" value="ECO:0000318"/>
    <property type="project" value="GO_Central"/>
</dbReference>
<dbReference type="GO" id="GO:0004595">
    <property type="term" value="F:pantetheine-phosphate adenylyltransferase activity"/>
    <property type="evidence" value="ECO:0007669"/>
    <property type="project" value="UniProtKB-UniRule"/>
</dbReference>
<dbReference type="GO" id="GO:0015937">
    <property type="term" value="P:coenzyme A biosynthetic process"/>
    <property type="evidence" value="ECO:0000318"/>
    <property type="project" value="GO_Central"/>
</dbReference>
<dbReference type="CDD" id="cd02164">
    <property type="entry name" value="PPAT_CoAS"/>
    <property type="match status" value="1"/>
</dbReference>
<dbReference type="FunFam" id="3.40.50.620:FF:000376">
    <property type="entry name" value="Phosphopantetheine adenylyltransferase"/>
    <property type="match status" value="1"/>
</dbReference>
<dbReference type="Gene3D" id="3.40.50.620">
    <property type="entry name" value="HUPs"/>
    <property type="match status" value="1"/>
</dbReference>
<dbReference type="HAMAP" id="MF_00647">
    <property type="entry name" value="PPAT_arch"/>
    <property type="match status" value="1"/>
</dbReference>
<dbReference type="InterPro" id="IPR004821">
    <property type="entry name" value="Cyt_trans-like"/>
</dbReference>
<dbReference type="InterPro" id="IPR023540">
    <property type="entry name" value="PPAT_arch"/>
</dbReference>
<dbReference type="InterPro" id="IPR014729">
    <property type="entry name" value="Rossmann-like_a/b/a_fold"/>
</dbReference>
<dbReference type="NCBIfam" id="TIGR00125">
    <property type="entry name" value="cyt_tran_rel"/>
    <property type="match status" value="1"/>
</dbReference>
<dbReference type="NCBIfam" id="NF001985">
    <property type="entry name" value="PRK00777.1"/>
    <property type="match status" value="1"/>
</dbReference>
<dbReference type="Pfam" id="PF01467">
    <property type="entry name" value="CTP_transf_like"/>
    <property type="match status" value="1"/>
</dbReference>
<dbReference type="SUPFAM" id="SSF52374">
    <property type="entry name" value="Nucleotidylyl transferase"/>
    <property type="match status" value="1"/>
</dbReference>
<accession>Q8TK70</accession>
<evidence type="ECO:0000255" key="1">
    <source>
        <dbReference type="HAMAP-Rule" id="MF_00647"/>
    </source>
</evidence>
<sequence>MPKVAVGGTFQYLHDGHARLIEKAFEIAGDGKVYIGLTSDEMLQKNHSIDNYENRRVRLLEYIDEMEIPKEKYEITRLNDPCGPTVEEDFDYIVVSPETYPVALKINRIREKKGKNPLEIVYVEYVMAEDGTPISSTRIAKGEIDRHGKMKRESQA</sequence>
<keyword id="KW-0067">ATP-binding</keyword>
<keyword id="KW-0173">Coenzyme A biosynthesis</keyword>
<keyword id="KW-0963">Cytoplasm</keyword>
<keyword id="KW-0547">Nucleotide-binding</keyword>
<keyword id="KW-0548">Nucleotidyltransferase</keyword>
<keyword id="KW-1185">Reference proteome</keyword>
<keyword id="KW-0808">Transferase</keyword>
<organism>
    <name type="scientific">Methanosarcina acetivorans (strain ATCC 35395 / DSM 2834 / JCM 12185 / C2A)</name>
    <dbReference type="NCBI Taxonomy" id="188937"/>
    <lineage>
        <taxon>Archaea</taxon>
        <taxon>Methanobacteriati</taxon>
        <taxon>Methanobacteriota</taxon>
        <taxon>Stenosarchaea group</taxon>
        <taxon>Methanomicrobia</taxon>
        <taxon>Methanosarcinales</taxon>
        <taxon>Methanosarcinaceae</taxon>
        <taxon>Methanosarcina</taxon>
    </lineage>
</organism>
<protein>
    <recommendedName>
        <fullName evidence="1">Phosphopantetheine adenylyltransferase</fullName>
        <ecNumber evidence="1">2.7.7.3</ecNumber>
    </recommendedName>
    <alternativeName>
        <fullName evidence="1">Dephospho-CoA pyrophosphorylase</fullName>
    </alternativeName>
    <alternativeName>
        <fullName evidence="1">Pantetheine-phosphate adenylyltransferase</fullName>
        <shortName evidence="1">PPAT</shortName>
    </alternativeName>
</protein>
<proteinExistence type="inferred from homology"/>